<protein>
    <recommendedName>
        <fullName>Putative helicase MOV-10</fullName>
        <ecNumber evidence="3">3.6.4.13</ecNumber>
    </recommendedName>
</protein>
<keyword id="KW-0067">ATP-binding</keyword>
<keyword id="KW-0963">Cytoplasm</keyword>
<keyword id="KW-0347">Helicase</keyword>
<keyword id="KW-0378">Hydrolase</keyword>
<keyword id="KW-0547">Nucleotide-binding</keyword>
<keyword id="KW-0539">Nucleus</keyword>
<keyword id="KW-1185">Reference proteome</keyword>
<keyword id="KW-0694">RNA-binding</keyword>
<keyword id="KW-0943">RNA-mediated gene silencing</keyword>
<sequence>MPRFSVAEARRYGDQFVQFLRDPSREQESRREVLRDIYSQEFRTRTDIRTPSFSSILYALRVSHQAQVHGQTVHFKKARRRVVVADQYRRPRTDTEVSAPAPGQQPSSGPPAPQSRAKKWAEFIRGKHGVEIVSEYDQANGQIRFPVALDKTKTFTVQVQNHGAEAVTLHRCRPLRRLQELSFLDEQGVTQGQALVLHPGGAYPIQVRCLTSHNGFFRAVVMFEFSKEPDGSFSIGRSIAAIAQSPLARELGPSAPYRPYQASLQRPITVVTEDGVPPVSSLKNELEKEIPLGTYPYPKSLKETIMLGPKTSPDSSWMKMQSLLEAPLQPENYKQKFELLLHLEEIQLEVDIRRYDLQEVPMVQNRALLLLNVPGVAENRPSVLRGDHLFASLSSERDSSPRVLYKGYVHGVELERVQLGFSPKLMKKFVNDLKFDVTFTFNRLPLQVQHRAAAMAMQKGLDSVLFPSASCQRSLFTGIFQPRWFDRKVEANEEQCQAVKHIVTGMSRPAPYLIFGPPGTGKTVTLVEAIKQVWSCFKDARILACAPSNSAADLLCQRLLTNIAPRYIYRIMASSANYKDVPADVRPCCNWDDSEKCYVYPSKKLLKPYRILITTLVTAGRLVSANFPPGYFSHVFIDECGHAVEPESVVAIAGLLTTMDPDTNPNGGQLVLAGDPQQLGPVPRSPLAAQHGLGTSLLERLMLHNALYAKSDEGYNPQFVTKLLWNYRSHKAILKVPNELFYDSELKAYEGSEPDVRNFYCTWEELPNRGVPIIFHGVCGEDEREAKSPSFFNTAEIEVVVQYLQKLLQSQGRRGCPTISPKEIGIISPYRKQVEKIRLAITSKDPVLRALPDIGQLKVGSVEEFQGQERRVILISTVRSCSEYLQLDQTFRLGFLKNPKRLNVALTRAKALLIVVGNAAVLSKDPHWHRFLRYCRDEGAYRGYPYEEEPPEEDSLANHLDSLHLGN</sequence>
<gene>
    <name type="primary">MOV10</name>
    <name type="ORF">RCJMB04_11i10</name>
</gene>
<name>MOV10_CHICK</name>
<reference key="1">
    <citation type="journal article" date="2005" name="Genome Biol.">
        <title>Full-length cDNAs from chicken bursal lymphocytes to facilitate gene function analysis.</title>
        <authorList>
            <person name="Caldwell R.B."/>
            <person name="Kierzek A.M."/>
            <person name="Arakawa H."/>
            <person name="Bezzubov Y."/>
            <person name="Zaim J."/>
            <person name="Fiedler P."/>
            <person name="Kutter S."/>
            <person name="Blagodatski A."/>
            <person name="Kostovska D."/>
            <person name="Koter M."/>
            <person name="Plachy J."/>
            <person name="Carninci P."/>
            <person name="Hayashizaki Y."/>
            <person name="Buerstedde J.-M."/>
        </authorList>
    </citation>
    <scope>NUCLEOTIDE SEQUENCE [LARGE SCALE MRNA]</scope>
    <source>
        <strain>CB</strain>
        <tissue>Bursa of Fabricius</tissue>
    </source>
</reference>
<dbReference type="EC" id="3.6.4.13" evidence="3"/>
<dbReference type="EMBL" id="AJ720147">
    <property type="protein sequence ID" value="CAG31806.1"/>
    <property type="molecule type" value="mRNA"/>
</dbReference>
<dbReference type="RefSeq" id="NP_001012861.1">
    <property type="nucleotide sequence ID" value="NM_001012843.1"/>
</dbReference>
<dbReference type="SMR" id="Q5ZKD7"/>
<dbReference type="FunCoup" id="Q5ZKD7">
    <property type="interactions" value="92"/>
</dbReference>
<dbReference type="PaxDb" id="9031-ENSGALP00000002366"/>
<dbReference type="GeneID" id="419872"/>
<dbReference type="KEGG" id="gga:419872"/>
<dbReference type="CTD" id="4343"/>
<dbReference type="VEuPathDB" id="HostDB:geneid_419872"/>
<dbReference type="eggNOG" id="KOG1804">
    <property type="taxonomic scope" value="Eukaryota"/>
</dbReference>
<dbReference type="InParanoid" id="Q5ZKD7"/>
<dbReference type="OrthoDB" id="6513042at2759"/>
<dbReference type="PhylomeDB" id="Q5ZKD7"/>
<dbReference type="PRO" id="PR:Q5ZKD7"/>
<dbReference type="Proteomes" id="UP000000539">
    <property type="component" value="Unassembled WGS sequence"/>
</dbReference>
<dbReference type="GO" id="GO:0036464">
    <property type="term" value="C:cytoplasmic ribonucleoprotein granule"/>
    <property type="evidence" value="ECO:0000250"/>
    <property type="project" value="UniProtKB"/>
</dbReference>
<dbReference type="GO" id="GO:0010494">
    <property type="term" value="C:cytoplasmic stress granule"/>
    <property type="evidence" value="ECO:0007669"/>
    <property type="project" value="UniProtKB-SubCell"/>
</dbReference>
<dbReference type="GO" id="GO:0005829">
    <property type="term" value="C:cytosol"/>
    <property type="evidence" value="ECO:0000250"/>
    <property type="project" value="UniProtKB"/>
</dbReference>
<dbReference type="GO" id="GO:0005634">
    <property type="term" value="C:nucleus"/>
    <property type="evidence" value="ECO:0000250"/>
    <property type="project" value="UniProtKB"/>
</dbReference>
<dbReference type="GO" id="GO:0043186">
    <property type="term" value="C:P granule"/>
    <property type="evidence" value="ECO:0000318"/>
    <property type="project" value="GO_Central"/>
</dbReference>
<dbReference type="GO" id="GO:0000932">
    <property type="term" value="C:P-body"/>
    <property type="evidence" value="ECO:0000250"/>
    <property type="project" value="UniProtKB"/>
</dbReference>
<dbReference type="GO" id="GO:0032574">
    <property type="term" value="F:5'-3' RNA helicase activity"/>
    <property type="evidence" value="ECO:0000250"/>
    <property type="project" value="UniProtKB"/>
</dbReference>
<dbReference type="GO" id="GO:0005524">
    <property type="term" value="F:ATP binding"/>
    <property type="evidence" value="ECO:0007669"/>
    <property type="project" value="UniProtKB-KW"/>
</dbReference>
<dbReference type="GO" id="GO:0016887">
    <property type="term" value="F:ATP hydrolysis activity"/>
    <property type="evidence" value="ECO:0007669"/>
    <property type="project" value="RHEA"/>
</dbReference>
<dbReference type="GO" id="GO:0003723">
    <property type="term" value="F:RNA binding"/>
    <property type="evidence" value="ECO:0000250"/>
    <property type="project" value="UniProtKB"/>
</dbReference>
<dbReference type="GO" id="GO:0061158">
    <property type="term" value="P:3'-UTR-mediated mRNA destabilization"/>
    <property type="evidence" value="ECO:0000250"/>
    <property type="project" value="UniProtKB"/>
</dbReference>
<dbReference type="GO" id="GO:0035279">
    <property type="term" value="P:miRNA-mediated gene silencing by mRNA destabilization"/>
    <property type="evidence" value="ECO:0000250"/>
    <property type="project" value="UniProtKB"/>
</dbReference>
<dbReference type="GO" id="GO:0035195">
    <property type="term" value="P:miRNA-mediated post-transcriptional gene silencing"/>
    <property type="evidence" value="ECO:0000250"/>
    <property type="project" value="UniProtKB"/>
</dbReference>
<dbReference type="GO" id="GO:0061014">
    <property type="term" value="P:positive regulation of mRNA catabolic process"/>
    <property type="evidence" value="ECO:0000250"/>
    <property type="project" value="UniProtKB"/>
</dbReference>
<dbReference type="GO" id="GO:0150011">
    <property type="term" value="P:regulation of neuron projection arborization"/>
    <property type="evidence" value="ECO:0000250"/>
    <property type="project" value="UniProtKB"/>
</dbReference>
<dbReference type="GO" id="GO:0035194">
    <property type="term" value="P:regulatory ncRNA-mediated post-transcriptional gene silencing"/>
    <property type="evidence" value="ECO:0000318"/>
    <property type="project" value="GO_Central"/>
</dbReference>
<dbReference type="GO" id="GO:0010526">
    <property type="term" value="P:transposable element silencing"/>
    <property type="evidence" value="ECO:0000250"/>
    <property type="project" value="UniProtKB"/>
</dbReference>
<dbReference type="CDD" id="cd18038">
    <property type="entry name" value="DEXXQc_Helz-like"/>
    <property type="match status" value="1"/>
</dbReference>
<dbReference type="CDD" id="cd18808">
    <property type="entry name" value="SF1_C_Upf1"/>
    <property type="match status" value="1"/>
</dbReference>
<dbReference type="FunFam" id="3.40.50.300:FF:000608">
    <property type="entry name" value="Mov10 RISC complex RNA helicase"/>
    <property type="match status" value="1"/>
</dbReference>
<dbReference type="FunFam" id="3.40.50.300:FF:001941">
    <property type="entry name" value="Mov10 RISC complex RNA helicase"/>
    <property type="match status" value="1"/>
</dbReference>
<dbReference type="Gene3D" id="3.40.50.300">
    <property type="entry name" value="P-loop containing nucleotide triphosphate hydrolases"/>
    <property type="match status" value="2"/>
</dbReference>
<dbReference type="InterPro" id="IPR041679">
    <property type="entry name" value="DNA2/NAM7-like_C"/>
</dbReference>
<dbReference type="InterPro" id="IPR041677">
    <property type="entry name" value="DNA2/NAM7_AAA_11"/>
</dbReference>
<dbReference type="InterPro" id="IPR049080">
    <property type="entry name" value="MOV-10-like_beta-barrel"/>
</dbReference>
<dbReference type="InterPro" id="IPR026122">
    <property type="entry name" value="MOV-10/SDE3_DEXXQ/H-box"/>
</dbReference>
<dbReference type="InterPro" id="IPR049079">
    <property type="entry name" value="Mov-10_helical"/>
</dbReference>
<dbReference type="InterPro" id="IPR049077">
    <property type="entry name" value="MOV-10_Ig-like"/>
</dbReference>
<dbReference type="InterPro" id="IPR049075">
    <property type="entry name" value="MOV-10_N"/>
</dbReference>
<dbReference type="InterPro" id="IPR027417">
    <property type="entry name" value="P-loop_NTPase"/>
</dbReference>
<dbReference type="InterPro" id="IPR047187">
    <property type="entry name" value="SF1_C_Upf1"/>
</dbReference>
<dbReference type="PANTHER" id="PTHR45418:SF5">
    <property type="entry name" value="BRCA2-INTERACTING PROTEIN-LIKE-RELATED"/>
    <property type="match status" value="1"/>
</dbReference>
<dbReference type="PANTHER" id="PTHR45418">
    <property type="entry name" value="CANCER/TESTIS ANTIGEN 55"/>
    <property type="match status" value="1"/>
</dbReference>
<dbReference type="Pfam" id="PF13086">
    <property type="entry name" value="AAA_11"/>
    <property type="match status" value="2"/>
</dbReference>
<dbReference type="Pfam" id="PF13087">
    <property type="entry name" value="AAA_12"/>
    <property type="match status" value="1"/>
</dbReference>
<dbReference type="Pfam" id="PF21634">
    <property type="entry name" value="MOV-10_beta-barrel"/>
    <property type="match status" value="1"/>
</dbReference>
<dbReference type="Pfam" id="PF21635">
    <property type="entry name" value="Mov-10_helical"/>
    <property type="match status" value="1"/>
</dbReference>
<dbReference type="Pfam" id="PF21633">
    <property type="entry name" value="MOV-10_Ig-like"/>
    <property type="match status" value="1"/>
</dbReference>
<dbReference type="Pfam" id="PF21632">
    <property type="entry name" value="MOV-10_N"/>
    <property type="match status" value="1"/>
</dbReference>
<dbReference type="SUPFAM" id="SSF52540">
    <property type="entry name" value="P-loop containing nucleoside triphosphate hydrolases"/>
    <property type="match status" value="1"/>
</dbReference>
<evidence type="ECO:0000250" key="1"/>
<evidence type="ECO:0000250" key="2">
    <source>
        <dbReference type="UniProtKB" id="P23249"/>
    </source>
</evidence>
<evidence type="ECO:0000250" key="3">
    <source>
        <dbReference type="UniProtKB" id="Q9HCE1"/>
    </source>
</evidence>
<evidence type="ECO:0000256" key="4">
    <source>
        <dbReference type="SAM" id="MobiDB-lite"/>
    </source>
</evidence>
<evidence type="ECO:0000305" key="5"/>
<comment type="function">
    <text evidence="2 3">5' to 3' RNA helicase that is involved in a number of cellular roles ranging from mRNA metabolism and translation, modulation of viral infectivity, inhibition of retrotransposition, or regulation of synaptic transmission. Plays an important role in innate antiviral immunity by promoting type I interferon production. Required for microRNA (miRNA)-mediated gene silencing by the RNA-induced silencing complex (RISC). Required for both miRNA-mediated translational repression and miRNA-mediated cleavage of complementary mRNAs by RISC. In cooperation with FMR1, regulates miRNA-mediated translational repression by AGO2. Restricts retrotransposition of long interspersed element-1 (LINE-1) (By similarity). Required for embryonic viability and for normal central nervous system development and function. May function as a messenger ribonucleoprotein (mRNP) clearance factor (By similarity).</text>
</comment>
<comment type="catalytic activity">
    <reaction evidence="3">
        <text>ATP + H2O = ADP + phosphate + H(+)</text>
        <dbReference type="Rhea" id="RHEA:13065"/>
        <dbReference type="ChEBI" id="CHEBI:15377"/>
        <dbReference type="ChEBI" id="CHEBI:15378"/>
        <dbReference type="ChEBI" id="CHEBI:30616"/>
        <dbReference type="ChEBI" id="CHEBI:43474"/>
        <dbReference type="ChEBI" id="CHEBI:456216"/>
        <dbReference type="EC" id="3.6.4.13"/>
    </reaction>
</comment>
<comment type="subcellular location">
    <subcellularLocation>
        <location evidence="3">Cytoplasm</location>
        <location evidence="3">P-body</location>
    </subcellularLocation>
    <subcellularLocation>
        <location evidence="3">Cytoplasm</location>
        <location evidence="3">Cytoplasmic ribonucleoprotein granule</location>
    </subcellularLocation>
    <subcellularLocation>
        <location evidence="3">Cytoplasm</location>
        <location evidence="3">Stress granule</location>
    </subcellularLocation>
    <subcellularLocation>
        <location evidence="2">Nucleus</location>
    </subcellularLocation>
    <subcellularLocation>
        <location evidence="2">Cytoplasm</location>
    </subcellularLocation>
</comment>
<comment type="similarity">
    <text evidence="5">Belongs to the DNA2/NAM7 helicase family. SDE3 subfamily.</text>
</comment>
<organism>
    <name type="scientific">Gallus gallus</name>
    <name type="common">Chicken</name>
    <dbReference type="NCBI Taxonomy" id="9031"/>
    <lineage>
        <taxon>Eukaryota</taxon>
        <taxon>Metazoa</taxon>
        <taxon>Chordata</taxon>
        <taxon>Craniata</taxon>
        <taxon>Vertebrata</taxon>
        <taxon>Euteleostomi</taxon>
        <taxon>Archelosauria</taxon>
        <taxon>Archosauria</taxon>
        <taxon>Dinosauria</taxon>
        <taxon>Saurischia</taxon>
        <taxon>Theropoda</taxon>
        <taxon>Coelurosauria</taxon>
        <taxon>Aves</taxon>
        <taxon>Neognathae</taxon>
        <taxon>Galloanserae</taxon>
        <taxon>Galliformes</taxon>
        <taxon>Phasianidae</taxon>
        <taxon>Phasianinae</taxon>
        <taxon>Gallus</taxon>
    </lineage>
</organism>
<feature type="chain" id="PRO_0000374667" description="Putative helicase MOV-10">
    <location>
        <begin position="1"/>
        <end position="967"/>
    </location>
</feature>
<feature type="region of interest" description="Disordered" evidence="4">
    <location>
        <begin position="85"/>
        <end position="117"/>
    </location>
</feature>
<feature type="short sequence motif" description="DEAG box">
    <location>
        <begin position="638"/>
        <end position="641"/>
    </location>
</feature>
<feature type="compositionally biased region" description="Low complexity" evidence="4">
    <location>
        <begin position="98"/>
        <end position="107"/>
    </location>
</feature>
<feature type="binding site" evidence="1">
    <location>
        <begin position="516"/>
        <end position="523"/>
    </location>
    <ligand>
        <name>ATP</name>
        <dbReference type="ChEBI" id="CHEBI:30616"/>
    </ligand>
</feature>
<proteinExistence type="evidence at transcript level"/>
<accession>Q5ZKD7</accession>